<evidence type="ECO:0000255" key="1"/>
<evidence type="ECO:0000269" key="2">
    <source>
    </source>
</evidence>
<evidence type="ECO:0000305" key="3"/>
<reference key="1">
    <citation type="journal article" date="2001" name="Immunogenetics">
        <title>Structural organization of the human MS4A gene cluster on chromosome 11q12.</title>
        <authorList>
            <person name="Liang Y."/>
            <person name="Buckley T.R."/>
            <person name="Tu L."/>
            <person name="Langdon S.D."/>
            <person name="Tedder T.F."/>
        </authorList>
    </citation>
    <scope>NUCLEOTIDE SEQUENCE [MRNA]</scope>
    <scope>VARIANT PHE-47</scope>
</reference>
<reference key="2">
    <citation type="journal article" date="2004" name="Genome Res.">
        <title>The status, quality, and expansion of the NIH full-length cDNA project: the Mammalian Gene Collection (MGC).</title>
        <authorList>
            <consortium name="The MGC Project Team"/>
        </authorList>
    </citation>
    <scope>NUCLEOTIDE SEQUENCE [LARGE SCALE MRNA]</scope>
    <source>
        <tissue>Liver</tissue>
        <tissue>Testis</tissue>
    </source>
</reference>
<protein>
    <recommendedName>
        <fullName>Membrane-spanning 4-domains subfamily A member 6E</fullName>
    </recommendedName>
</protein>
<keyword id="KW-0472">Membrane</keyword>
<keyword id="KW-1267">Proteomics identification</keyword>
<keyword id="KW-0675">Receptor</keyword>
<keyword id="KW-1185">Reference proteome</keyword>
<keyword id="KW-0812">Transmembrane</keyword>
<keyword id="KW-1133">Transmembrane helix</keyword>
<accession>Q96DS6</accession>
<accession>Q3MIL2</accession>
<accession>Q8NE56</accession>
<accession>Q96PG4</accession>
<accession>Q96PG5</accession>
<feature type="chain" id="PRO_0000158642" description="Membrane-spanning 4-domains subfamily A member 6E">
    <location>
        <begin position="1"/>
        <end position="147"/>
    </location>
</feature>
<feature type="topological domain" description="Cytoplasmic" evidence="1">
    <location>
        <begin position="1"/>
        <end position="52"/>
    </location>
</feature>
<feature type="transmembrane region" description="Helical" evidence="1">
    <location>
        <begin position="53"/>
        <end position="73"/>
    </location>
</feature>
<feature type="topological domain" description="Extracellular" evidence="1">
    <location>
        <begin position="74"/>
        <end position="120"/>
    </location>
</feature>
<feature type="transmembrane region" description="Helical" evidence="1">
    <location>
        <begin position="121"/>
        <end position="141"/>
    </location>
</feature>
<feature type="topological domain" description="Cytoplasmic" evidence="1">
    <location>
        <begin position="142"/>
        <end position="147"/>
    </location>
</feature>
<feature type="sequence variant" id="VAR_053518" description="In dbSNP:rs2304935.">
    <original>I</original>
    <variation>V</variation>
    <location>
        <position position="6"/>
    </location>
</feature>
<feature type="sequence variant" id="VAR_053519" description="In dbSNP:rs2304934.">
    <original>T</original>
    <variation>A</variation>
    <location>
        <position position="10"/>
    </location>
</feature>
<feature type="sequence variant" id="VAR_015654" description="In dbSNP:rs2304933." evidence="2">
    <original>V</original>
    <variation>F</variation>
    <location>
        <position position="47"/>
    </location>
</feature>
<comment type="function">
    <text>May be involved in signal transduction as a component of a multimeric receptor complex.</text>
</comment>
<comment type="interaction">
    <interactant intactId="EBI-17931225">
        <id>Q96DS6</id>
    </interactant>
    <interactant intactId="EBI-3905204">
        <id>P29033</id>
        <label>GJB2</label>
    </interactant>
    <organismsDiffer>false</organismsDiffer>
    <experiments>3</experiments>
</comment>
<comment type="interaction">
    <interactant intactId="EBI-17931225">
        <id>Q96DS6</id>
    </interactant>
    <interactant intactId="EBI-988826">
        <id>Q9Y385</id>
        <label>UBE2J1</label>
    </interactant>
    <organismsDiffer>false</organismsDiffer>
    <experiments>3</experiments>
</comment>
<comment type="subcellular location">
    <subcellularLocation>
        <location>Membrane</location>
        <topology>Multi-pass membrane protein</topology>
    </subcellularLocation>
</comment>
<comment type="tissue specificity">
    <text>Expressed by malignant and fetal tissue at very low levels.</text>
</comment>
<comment type="similarity">
    <text evidence="3">Belongs to the MS4A family.</text>
</comment>
<gene>
    <name type="primary">MS4A6E</name>
</gene>
<name>M4A6E_HUMAN</name>
<proteinExistence type="evidence at protein level"/>
<organism>
    <name type="scientific">Homo sapiens</name>
    <name type="common">Human</name>
    <dbReference type="NCBI Taxonomy" id="9606"/>
    <lineage>
        <taxon>Eukaryota</taxon>
        <taxon>Metazoa</taxon>
        <taxon>Chordata</taxon>
        <taxon>Craniata</taxon>
        <taxon>Vertebrata</taxon>
        <taxon>Euteleostomi</taxon>
        <taxon>Mammalia</taxon>
        <taxon>Eutheria</taxon>
        <taxon>Euarchontoglires</taxon>
        <taxon>Primates</taxon>
        <taxon>Haplorrhini</taxon>
        <taxon>Catarrhini</taxon>
        <taxon>Hominidae</taxon>
        <taxon>Homo</taxon>
    </lineage>
</organism>
<sequence length="147" mass="15909">MTSQPISNETIIMLPSNVINFSQAEKPEPTNQGQDSLKKRLQAKVKVIGVHSSLAGSILSALSALVGFILLSVNPAALNPASLQCKLDEKDIPTRLLLSYDYHSPYTMDCHRAKASLAGTLSLMLVSTVLEFCLAVLTAVLQWKQTV</sequence>
<dbReference type="EMBL" id="AF354931">
    <property type="protein sequence ID" value="AAL07358.1"/>
    <property type="molecule type" value="mRNA"/>
</dbReference>
<dbReference type="EMBL" id="AF354932">
    <property type="protein sequence ID" value="AAL07359.1"/>
    <property type="molecule type" value="mRNA"/>
</dbReference>
<dbReference type="EMBL" id="AF354933">
    <property type="protein sequence ID" value="AAL07360.1"/>
    <property type="molecule type" value="mRNA"/>
</dbReference>
<dbReference type="EMBL" id="AF333758">
    <property type="protein sequence ID" value="AAQ14868.1"/>
    <property type="molecule type" value="mRNA"/>
</dbReference>
<dbReference type="EMBL" id="BC034588">
    <property type="protein sequence ID" value="AAH34588.1"/>
    <property type="molecule type" value="mRNA"/>
</dbReference>
<dbReference type="EMBL" id="BC069322">
    <property type="protein sequence ID" value="AAH69322.1"/>
    <property type="molecule type" value="mRNA"/>
</dbReference>
<dbReference type="EMBL" id="BC101783">
    <property type="protein sequence ID" value="AAI01784.1"/>
    <property type="molecule type" value="mRNA"/>
</dbReference>
<dbReference type="CCDS" id="CCDS7984.1"/>
<dbReference type="RefSeq" id="NP_640342.1">
    <property type="nucleotide sequence ID" value="NM_139249.4"/>
</dbReference>
<dbReference type="BioGRID" id="128829">
    <property type="interactions" value="8"/>
</dbReference>
<dbReference type="FunCoup" id="Q96DS6">
    <property type="interactions" value="4"/>
</dbReference>
<dbReference type="IntAct" id="Q96DS6">
    <property type="interactions" value="7"/>
</dbReference>
<dbReference type="STRING" id="9606.ENSP00000300182"/>
<dbReference type="BioMuta" id="MS4A6E"/>
<dbReference type="MassIVE" id="Q96DS6"/>
<dbReference type="PaxDb" id="9606-ENSP00000300182"/>
<dbReference type="PeptideAtlas" id="Q96DS6"/>
<dbReference type="Antibodypedia" id="70842">
    <property type="antibodies" value="40 antibodies from 10 providers"/>
</dbReference>
<dbReference type="DNASU" id="245802"/>
<dbReference type="Ensembl" id="ENST00000300182.8">
    <property type="protein sequence ID" value="ENSP00000300182.4"/>
    <property type="gene ID" value="ENSG00000166926.9"/>
</dbReference>
<dbReference type="Ensembl" id="ENST00000684409.1">
    <property type="protein sequence ID" value="ENSP00000507799.1"/>
    <property type="gene ID" value="ENSG00000166926.9"/>
</dbReference>
<dbReference type="GeneID" id="245802"/>
<dbReference type="KEGG" id="hsa:245802"/>
<dbReference type="MANE-Select" id="ENST00000684409.1">
    <property type="protein sequence ID" value="ENSP00000507799.1"/>
    <property type="RefSeq nucleotide sequence ID" value="NM_139249.4"/>
    <property type="RefSeq protein sequence ID" value="NP_640342.1"/>
</dbReference>
<dbReference type="UCSC" id="uc001npd.4">
    <property type="organism name" value="human"/>
</dbReference>
<dbReference type="AGR" id="HGNC:14285"/>
<dbReference type="CTD" id="245802"/>
<dbReference type="DisGeNET" id="245802"/>
<dbReference type="GeneCards" id="MS4A6E"/>
<dbReference type="HGNC" id="HGNC:14285">
    <property type="gene designation" value="MS4A6E"/>
</dbReference>
<dbReference type="HPA" id="ENSG00000166926">
    <property type="expression patterns" value="Tissue enriched (testis)"/>
</dbReference>
<dbReference type="MIM" id="608402">
    <property type="type" value="gene"/>
</dbReference>
<dbReference type="neXtProt" id="NX_Q96DS6"/>
<dbReference type="OpenTargets" id="ENSG00000166926"/>
<dbReference type="PharmGKB" id="PA31123"/>
<dbReference type="VEuPathDB" id="HostDB:ENSG00000166926"/>
<dbReference type="eggNOG" id="ENOG502SUQB">
    <property type="taxonomic scope" value="Eukaryota"/>
</dbReference>
<dbReference type="GeneTree" id="ENSGT00940000163439"/>
<dbReference type="InParanoid" id="Q96DS6"/>
<dbReference type="OMA" id="YESPYTM"/>
<dbReference type="OrthoDB" id="9482647at2759"/>
<dbReference type="PAN-GO" id="Q96DS6">
    <property type="GO annotations" value="3 GO annotations based on evolutionary models"/>
</dbReference>
<dbReference type="PhylomeDB" id="Q96DS6"/>
<dbReference type="PathwayCommons" id="Q96DS6"/>
<dbReference type="SignaLink" id="Q96DS6"/>
<dbReference type="BioGRID-ORCS" id="245802">
    <property type="hits" value="8 hits in 1107 CRISPR screens"/>
</dbReference>
<dbReference type="GenomeRNAi" id="245802"/>
<dbReference type="Pharos" id="Q96DS6">
    <property type="development level" value="Tdark"/>
</dbReference>
<dbReference type="PRO" id="PR:Q96DS6"/>
<dbReference type="Proteomes" id="UP000005640">
    <property type="component" value="Chromosome 11"/>
</dbReference>
<dbReference type="RNAct" id="Q96DS6">
    <property type="molecule type" value="protein"/>
</dbReference>
<dbReference type="Bgee" id="ENSG00000166926">
    <property type="expression patterns" value="Expressed in left testis and 94 other cell types or tissues"/>
</dbReference>
<dbReference type="ExpressionAtlas" id="Q96DS6">
    <property type="expression patterns" value="baseline and differential"/>
</dbReference>
<dbReference type="GO" id="GO:0005886">
    <property type="term" value="C:plasma membrane"/>
    <property type="evidence" value="ECO:0000318"/>
    <property type="project" value="GO_Central"/>
</dbReference>
<dbReference type="GO" id="GO:0005802">
    <property type="term" value="C:trans-Golgi network"/>
    <property type="evidence" value="ECO:0000318"/>
    <property type="project" value="GO_Central"/>
</dbReference>
<dbReference type="GO" id="GO:0007166">
    <property type="term" value="P:cell surface receptor signaling pathway"/>
    <property type="evidence" value="ECO:0000318"/>
    <property type="project" value="GO_Central"/>
</dbReference>
<dbReference type="InterPro" id="IPR007237">
    <property type="entry name" value="CD20-like"/>
</dbReference>
<dbReference type="Pfam" id="PF04103">
    <property type="entry name" value="CD20"/>
    <property type="match status" value="1"/>
</dbReference>